<reference key="1">
    <citation type="journal article" date="1998" name="Science">
        <title>Genome sequence of the nematode C. elegans: a platform for investigating biology.</title>
        <authorList>
            <consortium name="The C. elegans sequencing consortium"/>
        </authorList>
    </citation>
    <scope>NUCLEOTIDE SEQUENCE [LARGE SCALE GENOMIC DNA]</scope>
    <source>
        <strain>Bristol N2</strain>
    </source>
</reference>
<reference evidence="4" key="2">
    <citation type="journal article" date="2024" name="Proc. Natl. Acad. Sci. U.S.A.">
        <title>OSGN-1 is a conserved flavin-containing monooxygenase required to stabilize the intercellular bridge in late cytokinesis.</title>
        <authorList>
            <person name="Goupil E."/>
            <person name="Lacroix L."/>
            <person name="Briere J."/>
            <person name="Guga S."/>
            <person name="Saba-El-Leil M.K."/>
            <person name="Meloche S."/>
            <person name="Labbe J.C."/>
        </authorList>
    </citation>
    <scope>FUNCTION</scope>
    <scope>CATALYTIC ACTIVITY</scope>
    <scope>COFACTOR</scope>
    <scope>DISRUPTION PHENOTYPE</scope>
    <scope>MUTAGENESIS OF PRO-21; ALA-99; SER-126; 201-TRP--CYS-455; THR-275 AND PRO-303</scope>
</reference>
<name>OSGI_CAEEL</name>
<organism>
    <name type="scientific">Caenorhabditis elegans</name>
    <dbReference type="NCBI Taxonomy" id="6239"/>
    <lineage>
        <taxon>Eukaryota</taxon>
        <taxon>Metazoa</taxon>
        <taxon>Ecdysozoa</taxon>
        <taxon>Nematoda</taxon>
        <taxon>Chromadorea</taxon>
        <taxon>Rhabditida</taxon>
        <taxon>Rhabditina</taxon>
        <taxon>Rhabditomorpha</taxon>
        <taxon>Rhabditoidea</taxon>
        <taxon>Rhabditidae</taxon>
        <taxon>Peloderinae</taxon>
        <taxon>Caenorhabditis</taxon>
    </lineage>
</organism>
<evidence type="ECO:0000250" key="1">
    <source>
        <dbReference type="UniProtKB" id="Q9UJX0"/>
    </source>
</evidence>
<evidence type="ECO:0000269" key="2">
    <source>
    </source>
</evidence>
<evidence type="ECO:0000303" key="3">
    <source>
    </source>
</evidence>
<evidence type="ECO:0000305" key="4"/>
<evidence type="ECO:0000312" key="5">
    <source>
        <dbReference type="WormBase" id="F30B5.4a"/>
    </source>
</evidence>
<accession>Q19910</accession>
<accession>G4SG12</accession>
<keyword id="KW-0274">FAD</keyword>
<keyword id="KW-0285">Flavoprotein</keyword>
<keyword id="KW-0503">Monooxygenase</keyword>
<keyword id="KW-0521">NADP</keyword>
<keyword id="KW-0560">Oxidoreductase</keyword>
<keyword id="KW-1185">Reference proteome</keyword>
<feature type="chain" id="PRO_0000165373" description="Oxidative stress induced growth inhibitor homolog osgn-1">
    <location>
        <begin position="1"/>
        <end position="455"/>
    </location>
</feature>
<feature type="mutagenesis site" description="No measurable monooxygenase activity. Intercellular bridges between primordial germ cells (PGC) are unstable in a proportion of embryos and eventually regress, prior to the start of epidermal morphogenesis." evidence="2">
    <original>P</original>
    <variation>L</variation>
    <location>
        <position position="21"/>
    </location>
</feature>
<feature type="mutagenesis site" description="No measurable monooxygenase activity. Intercellular bridges between primordial germ cells (PGC) are unstable in a proportion of embryos and eventually regress, prior to the start of epidermal morphogenesis." evidence="2">
    <original>A</original>
    <variation>T</variation>
    <location>
        <position position="99"/>
    </location>
</feature>
<feature type="mutagenesis site" description="No measurable monooxygenase activity. Intercellular bridges between primordial germ cells (PGC) are unstable in a proportion of embryos and eventually regress, prior to the start of epidermal morphogenesis." evidence="2">
    <original>S</original>
    <variation>N</variation>
    <location>
        <position position="126"/>
    </location>
</feature>
<feature type="mutagenesis site" description="Normal monooxygenase activity. Intercellular bridges between primordial germ cells (PGC) are unstable in a proportion of embryos and eventually regress, prior to the start of epidermal morphogenesis." evidence="2">
    <original>T</original>
    <variation>A</variation>
    <location>
        <position position="275"/>
    </location>
</feature>
<feature type="mutagenesis site" description="Normal monooxygenase activity. Intercellular bridges between primordial germ cells (PGC) are unstable in a proportion of embryos and eventually regress, prior to the start of epidermal morphogenesis." evidence="2">
    <original>P</original>
    <variation>S</variation>
    <location>
        <position position="303"/>
    </location>
</feature>
<comment type="function">
    <text evidence="2">Monooxygenase catalytic activity (PubMed:38442170). Involved in regulation of cytokinesis; promotes rho-1/RhoA activity, probably acting locally at the midbody in late cytokinesis (PubMed:38442170). Monooxygenase activity is required to stabilize structures between primordial germ cells (PGCs), termed intercellular bridges (PubMed:38442170). Dispensable for fertility (PubMed:38442170).</text>
</comment>
<comment type="cofactor">
    <cofactor>
        <name>NADPH</name>
        <dbReference type="ChEBI" id="CHEBI:57783"/>
    </cofactor>
    <text evidence="2">No monooxygenase catalytic activity in the absence of NADPH.</text>
</comment>
<comment type="subcellular location">
    <subcellularLocation>
        <location evidence="1">Midbody</location>
    </subcellularLocation>
    <text evidence="1">Localizes to the midbody in late cytokinesis.</text>
</comment>
<comment type="disruption phenotype">
    <text evidence="2">RNAi-mediated knockdown causes abnormal binucleation of primordial germ cells (PGCs).</text>
</comment>
<comment type="miscellaneous">
    <text evidence="2">Capable of rescuing defects caused by knockout of a human homolog, OSGIN1, in HeLa cells; rescues the activity of a RhoA reporter, membrane stability in late cytokinesis and cell ploidy.</text>
</comment>
<comment type="similarity">
    <text evidence="4">Belongs to the OKL38 family.</text>
</comment>
<dbReference type="EC" id="1.14.13.-" evidence="2"/>
<dbReference type="EMBL" id="FO081259">
    <property type="protein sequence ID" value="CCD70275.1"/>
    <property type="molecule type" value="Genomic_DNA"/>
</dbReference>
<dbReference type="PIR" id="T29571">
    <property type="entry name" value="T29571"/>
</dbReference>
<dbReference type="BioGRID" id="42318">
    <property type="interactions" value="1"/>
</dbReference>
<dbReference type="FunCoup" id="Q19910">
    <property type="interactions" value="1436"/>
</dbReference>
<dbReference type="STRING" id="6239.F30B5.4b.1"/>
<dbReference type="PaxDb" id="6239-F30B5.4b"/>
<dbReference type="EnsemblMetazoa" id="F30B5.4a.1">
    <property type="protein sequence ID" value="F30B5.4a.1"/>
    <property type="gene ID" value="WBGene00017934"/>
</dbReference>
<dbReference type="KEGG" id="cel:CELE_F30B5.4"/>
<dbReference type="AGR" id="WB:WBGene00017934"/>
<dbReference type="CTD" id="177185"/>
<dbReference type="WormBase" id="F30B5.4a">
    <property type="protein sequence ID" value="CE28552"/>
    <property type="gene ID" value="WBGene00017934"/>
    <property type="gene designation" value="osgn-1"/>
</dbReference>
<dbReference type="eggNOG" id="ENOG502QRUQ">
    <property type="taxonomic scope" value="Eukaryota"/>
</dbReference>
<dbReference type="InParanoid" id="Q19910"/>
<dbReference type="OrthoDB" id="412005at2759"/>
<dbReference type="PhylomeDB" id="Q19910"/>
<dbReference type="PRO" id="PR:Q19910"/>
<dbReference type="Proteomes" id="UP000001940">
    <property type="component" value="Chromosome IV"/>
</dbReference>
<dbReference type="Bgee" id="WBGene00017934">
    <property type="expression patterns" value="Expressed in germ line (C elegans) and 4 other cell types or tissues"/>
</dbReference>
<dbReference type="ExpressionAtlas" id="Q19910">
    <property type="expression patterns" value="baseline and differential"/>
</dbReference>
<dbReference type="Gene3D" id="3.50.50.60">
    <property type="entry name" value="FAD/NAD(P)-binding domain"/>
    <property type="match status" value="1"/>
</dbReference>
<dbReference type="InterPro" id="IPR036188">
    <property type="entry name" value="FAD/NAD-bd_sf"/>
</dbReference>
<dbReference type="InterPro" id="IPR029731">
    <property type="entry name" value="OKL38_fam"/>
</dbReference>
<dbReference type="PANTHER" id="PTHR15192:SF8">
    <property type="entry name" value="FAD_NAD(P)-BINDING DOMAIN-CONTAINING PROTEIN"/>
    <property type="match status" value="1"/>
</dbReference>
<dbReference type="PANTHER" id="PTHR15192">
    <property type="entry name" value="PROTEIN CBG05349"/>
    <property type="match status" value="1"/>
</dbReference>
<dbReference type="SUPFAM" id="SSF51905">
    <property type="entry name" value="FAD/NAD(P)-binding domain"/>
    <property type="match status" value="2"/>
</dbReference>
<gene>
    <name evidence="5" type="primary">osgn-1</name>
    <name evidence="5" type="ORF">F30B5.4</name>
</gene>
<protein>
    <recommendedName>
        <fullName evidence="5">Oxidative stress induced growth inhibitor homolog osgn-1</fullName>
        <ecNumber evidence="2">1.14.13.-</ecNumber>
    </recommendedName>
    <alternativeName>
        <fullName evidence="3">Flavin-containing monooxygenase protein</fullName>
    </alternativeName>
</protein>
<sequence>MHTGCCTTKFDTEVLIIGNGPAGIALSSFLSGMHPFYDATHPHENVTVHEKLLANHDFSLIDQDLSWSSNLTELSQSGRPLSVLYDMLVRPGADMGSDAPGCIQWELNRRREIPHMVIGETKIGGSWNEYDAEMLTVSFSDWMDMPGFTMEQWLGGRPLVKRLPSVAIATYLKKYVERLRLRKKFHQYFVVNSIKKIGDVWVTSGKRSTDGRSFVIRSKQVVVACGKTSPRKLQLPNEEHCSSNIVYDVRALKERLDATKKTVIDEDENYDTPSTSTCSPVIVVGDGVSSVDCVRHCLERDIPVVHVIRRTLRELRNVMLSRLSPIHYSEYTDIYRMMIGRSVHKNYQRVLDASITSVSKIHVEITTGSNREIIEMPYSTVAVCIGRESHFSTVFENAHTFLDYQSEQDETLFAVGAYAGDHFVRFLVGGCLRVAQHITGAANNNNVTAKLLPIC</sequence>
<proteinExistence type="evidence at protein level"/>